<keyword id="KW-0067">ATP-binding</keyword>
<keyword id="KW-1003">Cell membrane</keyword>
<keyword id="KW-0472">Membrane</keyword>
<keyword id="KW-0547">Nucleotide-binding</keyword>
<keyword id="KW-0918">Phosphonate transport</keyword>
<keyword id="KW-1278">Translocase</keyword>
<keyword id="KW-0813">Transport</keyword>
<name>PHNC_STAAM</name>
<protein>
    <recommendedName>
        <fullName evidence="1">Phosphonates import ATP-binding protein PhnC</fullName>
        <ecNumber evidence="1">7.3.2.2</ecNumber>
    </recommendedName>
</protein>
<comment type="function">
    <text evidence="1">Part of the ABC transporter complex PhnCDE involved in phosphonates import. Responsible for energy coupling to the transport system.</text>
</comment>
<comment type="catalytic activity">
    <reaction evidence="1">
        <text>phosphonate(out) + ATP + H2O = phosphonate(in) + ADP + phosphate + H(+)</text>
        <dbReference type="Rhea" id="RHEA:18065"/>
        <dbReference type="ChEBI" id="CHEBI:15377"/>
        <dbReference type="ChEBI" id="CHEBI:15378"/>
        <dbReference type="ChEBI" id="CHEBI:16215"/>
        <dbReference type="ChEBI" id="CHEBI:30616"/>
        <dbReference type="ChEBI" id="CHEBI:43474"/>
        <dbReference type="ChEBI" id="CHEBI:456216"/>
        <dbReference type="EC" id="7.3.2.2"/>
    </reaction>
</comment>
<comment type="subunit">
    <text evidence="1">The complex is composed of two ATP-binding proteins (PhnC), two transmembrane proteins (PhnE) and a solute-binding protein (PhnD).</text>
</comment>
<comment type="subcellular location">
    <subcellularLocation>
        <location evidence="1">Cell membrane</location>
        <topology evidence="1">Peripheral membrane protein</topology>
    </subcellularLocation>
</comment>
<comment type="similarity">
    <text evidence="1">Belongs to the ABC transporter superfamily. Phosphonates importer (TC 3.A.1.9.1) family.</text>
</comment>
<gene>
    <name evidence="1" type="primary">phnC</name>
    <name type="ordered locus">SAV0142</name>
</gene>
<evidence type="ECO:0000255" key="1">
    <source>
        <dbReference type="HAMAP-Rule" id="MF_01713"/>
    </source>
</evidence>
<reference key="1">
    <citation type="journal article" date="2001" name="Lancet">
        <title>Whole genome sequencing of meticillin-resistant Staphylococcus aureus.</title>
        <authorList>
            <person name="Kuroda M."/>
            <person name="Ohta T."/>
            <person name="Uchiyama I."/>
            <person name="Baba T."/>
            <person name="Yuzawa H."/>
            <person name="Kobayashi I."/>
            <person name="Cui L."/>
            <person name="Oguchi A."/>
            <person name="Aoki K."/>
            <person name="Nagai Y."/>
            <person name="Lian J.-Q."/>
            <person name="Ito T."/>
            <person name="Kanamori M."/>
            <person name="Matsumaru H."/>
            <person name="Maruyama A."/>
            <person name="Murakami H."/>
            <person name="Hosoyama A."/>
            <person name="Mizutani-Ui Y."/>
            <person name="Takahashi N.K."/>
            <person name="Sawano T."/>
            <person name="Inoue R."/>
            <person name="Kaito C."/>
            <person name="Sekimizu K."/>
            <person name="Hirakawa H."/>
            <person name="Kuhara S."/>
            <person name="Goto S."/>
            <person name="Yabuzaki J."/>
            <person name="Kanehisa M."/>
            <person name="Yamashita A."/>
            <person name="Oshima K."/>
            <person name="Furuya K."/>
            <person name="Yoshino C."/>
            <person name="Shiba T."/>
            <person name="Hattori M."/>
            <person name="Ogasawara N."/>
            <person name="Hayashi H."/>
            <person name="Hiramatsu K."/>
        </authorList>
    </citation>
    <scope>NUCLEOTIDE SEQUENCE [LARGE SCALE GENOMIC DNA]</scope>
    <source>
        <strain>Mu50 / ATCC 700699</strain>
    </source>
</reference>
<proteinExistence type="inferred from homology"/>
<accession>Q99X73</accession>
<organism>
    <name type="scientific">Staphylococcus aureus (strain Mu50 / ATCC 700699)</name>
    <dbReference type="NCBI Taxonomy" id="158878"/>
    <lineage>
        <taxon>Bacteria</taxon>
        <taxon>Bacillati</taxon>
        <taxon>Bacillota</taxon>
        <taxon>Bacilli</taxon>
        <taxon>Bacillales</taxon>
        <taxon>Staphylococcaceae</taxon>
        <taxon>Staphylococcus</taxon>
    </lineage>
</organism>
<dbReference type="EC" id="7.3.2.2" evidence="1"/>
<dbReference type="EMBL" id="BA000017">
    <property type="protein sequence ID" value="BAB56304.1"/>
    <property type="molecule type" value="Genomic_DNA"/>
</dbReference>
<dbReference type="RefSeq" id="WP_000078092.1">
    <property type="nucleotide sequence ID" value="NC_002758.2"/>
</dbReference>
<dbReference type="SMR" id="Q99X73"/>
<dbReference type="KEGG" id="sav:SAV0142"/>
<dbReference type="HOGENOM" id="CLU_000604_1_22_9"/>
<dbReference type="PhylomeDB" id="Q99X73"/>
<dbReference type="Proteomes" id="UP000002481">
    <property type="component" value="Chromosome"/>
</dbReference>
<dbReference type="GO" id="GO:0005886">
    <property type="term" value="C:plasma membrane"/>
    <property type="evidence" value="ECO:0007669"/>
    <property type="project" value="UniProtKB-SubCell"/>
</dbReference>
<dbReference type="GO" id="GO:0015416">
    <property type="term" value="F:ABC-type phosphonate transporter activity"/>
    <property type="evidence" value="ECO:0007669"/>
    <property type="project" value="UniProtKB-EC"/>
</dbReference>
<dbReference type="GO" id="GO:0005524">
    <property type="term" value="F:ATP binding"/>
    <property type="evidence" value="ECO:0007669"/>
    <property type="project" value="UniProtKB-KW"/>
</dbReference>
<dbReference type="GO" id="GO:0016887">
    <property type="term" value="F:ATP hydrolysis activity"/>
    <property type="evidence" value="ECO:0007669"/>
    <property type="project" value="InterPro"/>
</dbReference>
<dbReference type="CDD" id="cd03256">
    <property type="entry name" value="ABC_PhnC_transporter"/>
    <property type="match status" value="1"/>
</dbReference>
<dbReference type="Gene3D" id="3.40.50.300">
    <property type="entry name" value="P-loop containing nucleotide triphosphate hydrolases"/>
    <property type="match status" value="1"/>
</dbReference>
<dbReference type="InterPro" id="IPR003593">
    <property type="entry name" value="AAA+_ATPase"/>
</dbReference>
<dbReference type="InterPro" id="IPR003439">
    <property type="entry name" value="ABC_transporter-like_ATP-bd"/>
</dbReference>
<dbReference type="InterPro" id="IPR017871">
    <property type="entry name" value="ABC_transporter-like_CS"/>
</dbReference>
<dbReference type="InterPro" id="IPR012693">
    <property type="entry name" value="ABC_transpr_PhnC"/>
</dbReference>
<dbReference type="InterPro" id="IPR050086">
    <property type="entry name" value="MetN_ABC_transporter-like"/>
</dbReference>
<dbReference type="InterPro" id="IPR027417">
    <property type="entry name" value="P-loop_NTPase"/>
</dbReference>
<dbReference type="NCBIfam" id="TIGR02315">
    <property type="entry name" value="ABC_phnC"/>
    <property type="match status" value="1"/>
</dbReference>
<dbReference type="PANTHER" id="PTHR43166">
    <property type="entry name" value="AMINO ACID IMPORT ATP-BINDING PROTEIN"/>
    <property type="match status" value="1"/>
</dbReference>
<dbReference type="PANTHER" id="PTHR43166:SF6">
    <property type="entry name" value="PHOSPHONATES IMPORT ATP-BINDING PROTEIN PHNC"/>
    <property type="match status" value="1"/>
</dbReference>
<dbReference type="Pfam" id="PF00005">
    <property type="entry name" value="ABC_tran"/>
    <property type="match status" value="1"/>
</dbReference>
<dbReference type="SMART" id="SM00382">
    <property type="entry name" value="AAA"/>
    <property type="match status" value="1"/>
</dbReference>
<dbReference type="SUPFAM" id="SSF52540">
    <property type="entry name" value="P-loop containing nucleoside triphosphate hydrolases"/>
    <property type="match status" value="1"/>
</dbReference>
<dbReference type="PROSITE" id="PS00211">
    <property type="entry name" value="ABC_TRANSPORTER_1"/>
    <property type="match status" value="1"/>
</dbReference>
<dbReference type="PROSITE" id="PS50893">
    <property type="entry name" value="ABC_TRANSPORTER_2"/>
    <property type="match status" value="1"/>
</dbReference>
<dbReference type="PROSITE" id="PS51249">
    <property type="entry name" value="PHNC"/>
    <property type="match status" value="1"/>
</dbReference>
<feature type="chain" id="PRO_0000092730" description="Phosphonates import ATP-binding protein PhnC">
    <location>
        <begin position="1"/>
        <end position="257"/>
    </location>
</feature>
<feature type="domain" description="ABC transporter" evidence="1">
    <location>
        <begin position="4"/>
        <end position="248"/>
    </location>
</feature>
<feature type="binding site" evidence="1">
    <location>
        <begin position="37"/>
        <end position="44"/>
    </location>
    <ligand>
        <name>ATP</name>
        <dbReference type="ChEBI" id="CHEBI:30616"/>
    </ligand>
</feature>
<sequence>MSQIEFKNVSKVYPNGHVGLKNINLNIEKGEFAVIVGLSGAGKSTLLRSVNRLHDITSGEIFIQGKSITKAHGKALLEMRRNIGMIFQHFNLVKRSSVLRNVLSGRVGYHPTWKMVLGLFPKEDKIKAMDALERVNILDKYNQRSDELSGGQQQRISIARALCQESEIILADEPVASLDPLTTKQVMDDLRKINQELGITILINLHFVDLAKEYGTRIIGLRDGEVVYDGPASEATDDVFSEIYGRTIKEDEKLGVN</sequence>